<proteinExistence type="inferred from homology"/>
<sequence>MSQEFAHLSVLLEETVGGLNIKDDGIYIDGTFGRGGHSRQVLQRLGEKGRLIAIDRDPQAIEAAKQFADDPRFQIVHGGFGQLADYVEDLGLVGKIDGVLLDLGVSSPQLDDAERGFSFLRDGPLDMRMDNSQGETAAQWLARAEIEDMAWVFKTYGEEKNARHIARCIAADRDKTPFLRTKDLADLIARITKNKERNKHPATRVFQAIRIYINSELDQIDQALEGALTVLAPQGRLSIISFHSLEDRIVKRFIRRHSQGESVPHGLPITEDQINKSRKLRAIGKAIMPSDEEIERNARARSSVLRIAERLDY</sequence>
<comment type="function">
    <text evidence="1">Specifically methylates the N4 position of cytidine in position 1402 (C1402) of 16S rRNA.</text>
</comment>
<comment type="catalytic activity">
    <reaction evidence="1">
        <text>cytidine(1402) in 16S rRNA + S-adenosyl-L-methionine = N(4)-methylcytidine(1402) in 16S rRNA + S-adenosyl-L-homocysteine + H(+)</text>
        <dbReference type="Rhea" id="RHEA:42928"/>
        <dbReference type="Rhea" id="RHEA-COMP:10286"/>
        <dbReference type="Rhea" id="RHEA-COMP:10287"/>
        <dbReference type="ChEBI" id="CHEBI:15378"/>
        <dbReference type="ChEBI" id="CHEBI:57856"/>
        <dbReference type="ChEBI" id="CHEBI:59789"/>
        <dbReference type="ChEBI" id="CHEBI:74506"/>
        <dbReference type="ChEBI" id="CHEBI:82748"/>
        <dbReference type="EC" id="2.1.1.199"/>
    </reaction>
</comment>
<comment type="subcellular location">
    <subcellularLocation>
        <location evidence="1">Cytoplasm</location>
    </subcellularLocation>
</comment>
<comment type="similarity">
    <text evidence="1">Belongs to the methyltransferase superfamily. RsmH family.</text>
</comment>
<name>RSMH_SHEON</name>
<organism>
    <name type="scientific">Shewanella oneidensis (strain ATCC 700550 / JCM 31522 / CIP 106686 / LMG 19005 / NCIMB 14063 / MR-1)</name>
    <dbReference type="NCBI Taxonomy" id="211586"/>
    <lineage>
        <taxon>Bacteria</taxon>
        <taxon>Pseudomonadati</taxon>
        <taxon>Pseudomonadota</taxon>
        <taxon>Gammaproteobacteria</taxon>
        <taxon>Alteromonadales</taxon>
        <taxon>Shewanellaceae</taxon>
        <taxon>Shewanella</taxon>
    </lineage>
</organism>
<gene>
    <name evidence="1" type="primary">rsmH</name>
    <name type="synonym">mraW</name>
    <name type="ordered locus">SO_4227</name>
</gene>
<keyword id="KW-0963">Cytoplasm</keyword>
<keyword id="KW-0489">Methyltransferase</keyword>
<keyword id="KW-1185">Reference proteome</keyword>
<keyword id="KW-0698">rRNA processing</keyword>
<keyword id="KW-0949">S-adenosyl-L-methionine</keyword>
<keyword id="KW-0808">Transferase</keyword>
<reference key="1">
    <citation type="journal article" date="2002" name="Nat. Biotechnol.">
        <title>Genome sequence of the dissimilatory metal ion-reducing bacterium Shewanella oneidensis.</title>
        <authorList>
            <person name="Heidelberg J.F."/>
            <person name="Paulsen I.T."/>
            <person name="Nelson K.E."/>
            <person name="Gaidos E.J."/>
            <person name="Nelson W.C."/>
            <person name="Read T.D."/>
            <person name="Eisen J.A."/>
            <person name="Seshadri R."/>
            <person name="Ward N.L."/>
            <person name="Methe B.A."/>
            <person name="Clayton R.A."/>
            <person name="Meyer T."/>
            <person name="Tsapin A."/>
            <person name="Scott J."/>
            <person name="Beanan M.J."/>
            <person name="Brinkac L.M."/>
            <person name="Daugherty S.C."/>
            <person name="DeBoy R.T."/>
            <person name="Dodson R.J."/>
            <person name="Durkin A.S."/>
            <person name="Haft D.H."/>
            <person name="Kolonay J.F."/>
            <person name="Madupu R."/>
            <person name="Peterson J.D."/>
            <person name="Umayam L.A."/>
            <person name="White O."/>
            <person name="Wolf A.M."/>
            <person name="Vamathevan J.J."/>
            <person name="Weidman J.F."/>
            <person name="Impraim M."/>
            <person name="Lee K."/>
            <person name="Berry K.J."/>
            <person name="Lee C."/>
            <person name="Mueller J."/>
            <person name="Khouri H.M."/>
            <person name="Gill J."/>
            <person name="Utterback T.R."/>
            <person name="McDonald L.A."/>
            <person name="Feldblyum T.V."/>
            <person name="Smith H.O."/>
            <person name="Venter J.C."/>
            <person name="Nealson K.H."/>
            <person name="Fraser C.M."/>
        </authorList>
    </citation>
    <scope>NUCLEOTIDE SEQUENCE [LARGE SCALE GENOMIC DNA]</scope>
    <source>
        <strain>ATCC 700550 / JCM 31522 / CIP 106686 / LMG 19005 / NCIMB 14063 / MR-1</strain>
    </source>
</reference>
<dbReference type="EC" id="2.1.1.199" evidence="1"/>
<dbReference type="EMBL" id="AE014299">
    <property type="protein sequence ID" value="AAN57199.1"/>
    <property type="molecule type" value="Genomic_DNA"/>
</dbReference>
<dbReference type="RefSeq" id="NP_719755.1">
    <property type="nucleotide sequence ID" value="NC_004347.2"/>
</dbReference>
<dbReference type="RefSeq" id="WP_011073908.1">
    <property type="nucleotide sequence ID" value="NZ_CP053946.1"/>
</dbReference>
<dbReference type="SMR" id="Q8E9P0"/>
<dbReference type="STRING" id="211586.SO_4227"/>
<dbReference type="PaxDb" id="211586-SO_4227"/>
<dbReference type="KEGG" id="son:SO_4227"/>
<dbReference type="PATRIC" id="fig|211586.12.peg.4085"/>
<dbReference type="eggNOG" id="COG0275">
    <property type="taxonomic scope" value="Bacteria"/>
</dbReference>
<dbReference type="HOGENOM" id="CLU_038422_2_0_6"/>
<dbReference type="OrthoDB" id="9806637at2"/>
<dbReference type="PhylomeDB" id="Q8E9P0"/>
<dbReference type="BioCyc" id="SONE211586:G1GMP-3904-MONOMER"/>
<dbReference type="Proteomes" id="UP000008186">
    <property type="component" value="Chromosome"/>
</dbReference>
<dbReference type="GO" id="GO:0005737">
    <property type="term" value="C:cytoplasm"/>
    <property type="evidence" value="ECO:0000318"/>
    <property type="project" value="GO_Central"/>
</dbReference>
<dbReference type="GO" id="GO:0071424">
    <property type="term" value="F:rRNA (cytosine-N4-)-methyltransferase activity"/>
    <property type="evidence" value="ECO:0000318"/>
    <property type="project" value="GO_Central"/>
</dbReference>
<dbReference type="GO" id="GO:0070475">
    <property type="term" value="P:rRNA base methylation"/>
    <property type="evidence" value="ECO:0000318"/>
    <property type="project" value="GO_Central"/>
</dbReference>
<dbReference type="FunFam" id="1.10.150.170:FF:000001">
    <property type="entry name" value="Ribosomal RNA small subunit methyltransferase H"/>
    <property type="match status" value="1"/>
</dbReference>
<dbReference type="Gene3D" id="1.10.150.170">
    <property type="entry name" value="Putative methyltransferase TM0872, insert domain"/>
    <property type="match status" value="1"/>
</dbReference>
<dbReference type="Gene3D" id="3.40.50.150">
    <property type="entry name" value="Vaccinia Virus protein VP39"/>
    <property type="match status" value="1"/>
</dbReference>
<dbReference type="HAMAP" id="MF_01007">
    <property type="entry name" value="16SrRNA_methyltr_H"/>
    <property type="match status" value="1"/>
</dbReference>
<dbReference type="InterPro" id="IPR002903">
    <property type="entry name" value="RsmH"/>
</dbReference>
<dbReference type="InterPro" id="IPR023397">
    <property type="entry name" value="SAM-dep_MeTrfase_MraW_recog"/>
</dbReference>
<dbReference type="InterPro" id="IPR029063">
    <property type="entry name" value="SAM-dependent_MTases_sf"/>
</dbReference>
<dbReference type="NCBIfam" id="TIGR00006">
    <property type="entry name" value="16S rRNA (cytosine(1402)-N(4))-methyltransferase RsmH"/>
    <property type="match status" value="1"/>
</dbReference>
<dbReference type="PANTHER" id="PTHR11265:SF0">
    <property type="entry name" value="12S RRNA N4-METHYLCYTIDINE METHYLTRANSFERASE"/>
    <property type="match status" value="1"/>
</dbReference>
<dbReference type="PANTHER" id="PTHR11265">
    <property type="entry name" value="S-ADENOSYL-METHYLTRANSFERASE MRAW"/>
    <property type="match status" value="1"/>
</dbReference>
<dbReference type="Pfam" id="PF01795">
    <property type="entry name" value="Methyltransf_5"/>
    <property type="match status" value="1"/>
</dbReference>
<dbReference type="PIRSF" id="PIRSF004486">
    <property type="entry name" value="MraW"/>
    <property type="match status" value="1"/>
</dbReference>
<dbReference type="SUPFAM" id="SSF81799">
    <property type="entry name" value="Putative methyltransferase TM0872, insert domain"/>
    <property type="match status" value="1"/>
</dbReference>
<dbReference type="SUPFAM" id="SSF53335">
    <property type="entry name" value="S-adenosyl-L-methionine-dependent methyltransferases"/>
    <property type="match status" value="1"/>
</dbReference>
<evidence type="ECO:0000255" key="1">
    <source>
        <dbReference type="HAMAP-Rule" id="MF_01007"/>
    </source>
</evidence>
<feature type="chain" id="PRO_0000108700" description="Ribosomal RNA small subunit methyltransferase H">
    <location>
        <begin position="1"/>
        <end position="313"/>
    </location>
</feature>
<feature type="binding site" evidence="1">
    <location>
        <begin position="35"/>
        <end position="37"/>
    </location>
    <ligand>
        <name>S-adenosyl-L-methionine</name>
        <dbReference type="ChEBI" id="CHEBI:59789"/>
    </ligand>
</feature>
<feature type="binding site" evidence="1">
    <location>
        <position position="55"/>
    </location>
    <ligand>
        <name>S-adenosyl-L-methionine</name>
        <dbReference type="ChEBI" id="CHEBI:59789"/>
    </ligand>
</feature>
<feature type="binding site" evidence="1">
    <location>
        <position position="80"/>
    </location>
    <ligand>
        <name>S-adenosyl-L-methionine</name>
        <dbReference type="ChEBI" id="CHEBI:59789"/>
    </ligand>
</feature>
<feature type="binding site" evidence="1">
    <location>
        <position position="102"/>
    </location>
    <ligand>
        <name>S-adenosyl-L-methionine</name>
        <dbReference type="ChEBI" id="CHEBI:59789"/>
    </ligand>
</feature>
<feature type="binding site" evidence="1">
    <location>
        <position position="109"/>
    </location>
    <ligand>
        <name>S-adenosyl-L-methionine</name>
        <dbReference type="ChEBI" id="CHEBI:59789"/>
    </ligand>
</feature>
<protein>
    <recommendedName>
        <fullName evidence="1">Ribosomal RNA small subunit methyltransferase H</fullName>
        <ecNumber evidence="1">2.1.1.199</ecNumber>
    </recommendedName>
    <alternativeName>
        <fullName evidence="1">16S rRNA m(4)C1402 methyltransferase</fullName>
    </alternativeName>
    <alternativeName>
        <fullName evidence="1">rRNA (cytosine-N(4)-)-methyltransferase RsmH</fullName>
    </alternativeName>
</protein>
<accession>Q8E9P0</accession>